<gene>
    <name evidence="1" type="primary">rpsG</name>
    <name evidence="1" type="synonym">rps7</name>
    <name type="ordered locus">Syncc9605_0322</name>
</gene>
<comment type="function">
    <text evidence="1">One of the primary rRNA binding proteins, it binds directly to 16S rRNA where it nucleates assembly of the head domain of the 30S subunit. Is located at the subunit interface close to the decoding center, probably blocks exit of the E-site tRNA.</text>
</comment>
<comment type="subunit">
    <text evidence="1">Part of the 30S ribosomal subunit. Contacts proteins S9 and S11.</text>
</comment>
<comment type="similarity">
    <text evidence="1">Belongs to the universal ribosomal protein uS7 family.</text>
</comment>
<sequence length="156" mass="17530">MSRRNAAEKRPILPDPQFNSRLATMMVVRLMQHGKKSTAQRILSDAFGLINERTGGDPLELFETAVKNATPLVEVRARRVGGATYQVPMEVRQERGTAMALRWLVSFSRARNGRSMAQKLAGELMDAANEAGNAVRKREETHKMAEANKAFAHYRY</sequence>
<organism>
    <name type="scientific">Synechococcus sp. (strain CC9605)</name>
    <dbReference type="NCBI Taxonomy" id="110662"/>
    <lineage>
        <taxon>Bacteria</taxon>
        <taxon>Bacillati</taxon>
        <taxon>Cyanobacteriota</taxon>
        <taxon>Cyanophyceae</taxon>
        <taxon>Synechococcales</taxon>
        <taxon>Synechococcaceae</taxon>
        <taxon>Synechococcus</taxon>
    </lineage>
</organism>
<proteinExistence type="inferred from homology"/>
<evidence type="ECO:0000255" key="1">
    <source>
        <dbReference type="HAMAP-Rule" id="MF_00480"/>
    </source>
</evidence>
<evidence type="ECO:0000305" key="2"/>
<reference key="1">
    <citation type="submission" date="2005-07" db="EMBL/GenBank/DDBJ databases">
        <title>Complete sequence of Synechococcus sp. CC9605.</title>
        <authorList>
            <consortium name="US DOE Joint Genome Institute"/>
            <person name="Copeland A."/>
            <person name="Lucas S."/>
            <person name="Lapidus A."/>
            <person name="Barry K."/>
            <person name="Detter J.C."/>
            <person name="Glavina T."/>
            <person name="Hammon N."/>
            <person name="Israni S."/>
            <person name="Pitluck S."/>
            <person name="Schmutz J."/>
            <person name="Martinez M."/>
            <person name="Larimer F."/>
            <person name="Land M."/>
            <person name="Kyrpides N."/>
            <person name="Ivanova N."/>
            <person name="Richardson P."/>
        </authorList>
    </citation>
    <scope>NUCLEOTIDE SEQUENCE [LARGE SCALE GENOMIC DNA]</scope>
    <source>
        <strain>CC9605</strain>
    </source>
</reference>
<accession>Q3AMT4</accession>
<dbReference type="EMBL" id="CP000110">
    <property type="protein sequence ID" value="ABB34098.1"/>
    <property type="molecule type" value="Genomic_DNA"/>
</dbReference>
<dbReference type="RefSeq" id="WP_006849937.1">
    <property type="nucleotide sequence ID" value="NC_007516.1"/>
</dbReference>
<dbReference type="SMR" id="Q3AMT4"/>
<dbReference type="STRING" id="110662.Syncc9605_0322"/>
<dbReference type="KEGG" id="syd:Syncc9605_0322"/>
<dbReference type="eggNOG" id="COG0049">
    <property type="taxonomic scope" value="Bacteria"/>
</dbReference>
<dbReference type="HOGENOM" id="CLU_072226_1_1_3"/>
<dbReference type="OrthoDB" id="9807653at2"/>
<dbReference type="GO" id="GO:0015935">
    <property type="term" value="C:small ribosomal subunit"/>
    <property type="evidence" value="ECO:0007669"/>
    <property type="project" value="InterPro"/>
</dbReference>
<dbReference type="GO" id="GO:0019843">
    <property type="term" value="F:rRNA binding"/>
    <property type="evidence" value="ECO:0007669"/>
    <property type="project" value="UniProtKB-UniRule"/>
</dbReference>
<dbReference type="GO" id="GO:0003735">
    <property type="term" value="F:structural constituent of ribosome"/>
    <property type="evidence" value="ECO:0007669"/>
    <property type="project" value="InterPro"/>
</dbReference>
<dbReference type="GO" id="GO:0000049">
    <property type="term" value="F:tRNA binding"/>
    <property type="evidence" value="ECO:0007669"/>
    <property type="project" value="UniProtKB-UniRule"/>
</dbReference>
<dbReference type="GO" id="GO:0006412">
    <property type="term" value="P:translation"/>
    <property type="evidence" value="ECO:0007669"/>
    <property type="project" value="UniProtKB-UniRule"/>
</dbReference>
<dbReference type="CDD" id="cd14871">
    <property type="entry name" value="uS7_Chloroplast"/>
    <property type="match status" value="1"/>
</dbReference>
<dbReference type="FunFam" id="1.10.455.10:FF:000001">
    <property type="entry name" value="30S ribosomal protein S7"/>
    <property type="match status" value="1"/>
</dbReference>
<dbReference type="Gene3D" id="1.10.455.10">
    <property type="entry name" value="Ribosomal protein S7 domain"/>
    <property type="match status" value="1"/>
</dbReference>
<dbReference type="HAMAP" id="MF_00480_B">
    <property type="entry name" value="Ribosomal_uS7_B"/>
    <property type="match status" value="1"/>
</dbReference>
<dbReference type="InterPro" id="IPR000235">
    <property type="entry name" value="Ribosomal_uS7"/>
</dbReference>
<dbReference type="InterPro" id="IPR005717">
    <property type="entry name" value="Ribosomal_uS7_bac/org-type"/>
</dbReference>
<dbReference type="InterPro" id="IPR020606">
    <property type="entry name" value="Ribosomal_uS7_CS"/>
</dbReference>
<dbReference type="InterPro" id="IPR023798">
    <property type="entry name" value="Ribosomal_uS7_dom"/>
</dbReference>
<dbReference type="InterPro" id="IPR036823">
    <property type="entry name" value="Ribosomal_uS7_dom_sf"/>
</dbReference>
<dbReference type="NCBIfam" id="TIGR01029">
    <property type="entry name" value="rpsG_bact"/>
    <property type="match status" value="1"/>
</dbReference>
<dbReference type="PANTHER" id="PTHR11205">
    <property type="entry name" value="RIBOSOMAL PROTEIN S7"/>
    <property type="match status" value="1"/>
</dbReference>
<dbReference type="Pfam" id="PF00177">
    <property type="entry name" value="Ribosomal_S7"/>
    <property type="match status" value="1"/>
</dbReference>
<dbReference type="PIRSF" id="PIRSF002122">
    <property type="entry name" value="RPS7p_RPS7a_RPS5e_RPS7o"/>
    <property type="match status" value="1"/>
</dbReference>
<dbReference type="SUPFAM" id="SSF47973">
    <property type="entry name" value="Ribosomal protein S7"/>
    <property type="match status" value="1"/>
</dbReference>
<dbReference type="PROSITE" id="PS00052">
    <property type="entry name" value="RIBOSOMAL_S7"/>
    <property type="match status" value="1"/>
</dbReference>
<name>RS7_SYNSC</name>
<feature type="chain" id="PRO_0000241779" description="Small ribosomal subunit protein uS7">
    <location>
        <begin position="1"/>
        <end position="156"/>
    </location>
</feature>
<protein>
    <recommendedName>
        <fullName evidence="1">Small ribosomal subunit protein uS7</fullName>
    </recommendedName>
    <alternativeName>
        <fullName evidence="2">30S ribosomal protein S7</fullName>
    </alternativeName>
</protein>
<keyword id="KW-0687">Ribonucleoprotein</keyword>
<keyword id="KW-0689">Ribosomal protein</keyword>
<keyword id="KW-0694">RNA-binding</keyword>
<keyword id="KW-0699">rRNA-binding</keyword>
<keyword id="KW-0820">tRNA-binding</keyword>